<dbReference type="EC" id="2.4.1.25"/>
<dbReference type="EMBL" id="AP005452">
    <property type="protein sequence ID" value="BAD31425.1"/>
    <property type="molecule type" value="Genomic_DNA"/>
</dbReference>
<dbReference type="EMBL" id="AP008213">
    <property type="protein sequence ID" value="BAF22461.1"/>
    <property type="molecule type" value="Genomic_DNA"/>
</dbReference>
<dbReference type="EMBL" id="AP014963">
    <property type="protein sequence ID" value="BAT03073.1"/>
    <property type="molecule type" value="Genomic_DNA"/>
</dbReference>
<dbReference type="EMBL" id="AK067082">
    <property type="status" value="NOT_ANNOTATED_CDS"/>
    <property type="molecule type" value="mRNA"/>
</dbReference>
<dbReference type="RefSeq" id="XP_015647212.1">
    <property type="nucleotide sequence ID" value="XM_015791726.1"/>
</dbReference>
<dbReference type="FunCoup" id="Q69Q02">
    <property type="interactions" value="479"/>
</dbReference>
<dbReference type="STRING" id="39947.Q69Q02"/>
<dbReference type="PaxDb" id="39947-Q69Q02"/>
<dbReference type="EnsemblPlants" id="Os07t0662900-01">
    <property type="protein sequence ID" value="Os07t0662900-01"/>
    <property type="gene ID" value="Os07g0662900"/>
</dbReference>
<dbReference type="Gramene" id="Os07t0662900-01">
    <property type="protein sequence ID" value="Os07t0662900-01"/>
    <property type="gene ID" value="Os07g0662900"/>
</dbReference>
<dbReference type="KEGG" id="dosa:Os07g0662900"/>
<dbReference type="eggNOG" id="ENOG502QR3V">
    <property type="taxonomic scope" value="Eukaryota"/>
</dbReference>
<dbReference type="HOGENOM" id="CLU_014132_0_0_1"/>
<dbReference type="InParanoid" id="Q69Q02"/>
<dbReference type="OMA" id="HYEFKED"/>
<dbReference type="OrthoDB" id="6123450at2759"/>
<dbReference type="Proteomes" id="UP000000763">
    <property type="component" value="Chromosome 7"/>
</dbReference>
<dbReference type="Proteomes" id="UP000059680">
    <property type="component" value="Chromosome 7"/>
</dbReference>
<dbReference type="ExpressionAtlas" id="Q69Q02">
    <property type="expression patterns" value="baseline and differential"/>
</dbReference>
<dbReference type="GO" id="GO:0005829">
    <property type="term" value="C:cytosol"/>
    <property type="evidence" value="ECO:0007669"/>
    <property type="project" value="UniProtKB-SubCell"/>
</dbReference>
<dbReference type="GO" id="GO:0004134">
    <property type="term" value="F:4-alpha-glucanotransferase activity"/>
    <property type="evidence" value="ECO:0007669"/>
    <property type="project" value="UniProtKB-EC"/>
</dbReference>
<dbReference type="GO" id="GO:2001070">
    <property type="term" value="F:starch binding"/>
    <property type="evidence" value="ECO:0007669"/>
    <property type="project" value="InterPro"/>
</dbReference>
<dbReference type="GO" id="GO:0005975">
    <property type="term" value="P:carbohydrate metabolic process"/>
    <property type="evidence" value="ECO:0007669"/>
    <property type="project" value="InterPro"/>
</dbReference>
<dbReference type="CDD" id="cd05815">
    <property type="entry name" value="CBM20_DPE2_repeat1"/>
    <property type="match status" value="1"/>
</dbReference>
<dbReference type="CDD" id="cd05816">
    <property type="entry name" value="CBM20_DPE2_repeat2"/>
    <property type="match status" value="1"/>
</dbReference>
<dbReference type="Gene3D" id="3.20.20.80">
    <property type="entry name" value="Glycosidases"/>
    <property type="match status" value="2"/>
</dbReference>
<dbReference type="Gene3D" id="2.60.40.10">
    <property type="entry name" value="Immunoglobulins"/>
    <property type="match status" value="2"/>
</dbReference>
<dbReference type="InterPro" id="IPR013784">
    <property type="entry name" value="Carb-bd-like_fold"/>
</dbReference>
<dbReference type="InterPro" id="IPR002044">
    <property type="entry name" value="CBM20"/>
</dbReference>
<dbReference type="InterPro" id="IPR034840">
    <property type="entry name" value="CBM20_DPE2_1"/>
</dbReference>
<dbReference type="InterPro" id="IPR034841">
    <property type="entry name" value="CBM20_DPE2_2"/>
</dbReference>
<dbReference type="InterPro" id="IPR003385">
    <property type="entry name" value="Glyco_hydro_77"/>
</dbReference>
<dbReference type="InterPro" id="IPR017853">
    <property type="entry name" value="Glycoside_hydrolase_SF"/>
</dbReference>
<dbReference type="InterPro" id="IPR013783">
    <property type="entry name" value="Ig-like_fold"/>
</dbReference>
<dbReference type="PANTHER" id="PTHR32518">
    <property type="match status" value="1"/>
</dbReference>
<dbReference type="PANTHER" id="PTHR32518:SF3">
    <property type="entry name" value="4-ALPHA-GLUCANOTRANSFERASE"/>
    <property type="match status" value="1"/>
</dbReference>
<dbReference type="Pfam" id="PF00686">
    <property type="entry name" value="CBM_20"/>
    <property type="match status" value="2"/>
</dbReference>
<dbReference type="Pfam" id="PF02446">
    <property type="entry name" value="Glyco_hydro_77"/>
    <property type="match status" value="1"/>
</dbReference>
<dbReference type="SMART" id="SM01065">
    <property type="entry name" value="CBM_2"/>
    <property type="match status" value="2"/>
</dbReference>
<dbReference type="SUPFAM" id="SSF51445">
    <property type="entry name" value="(Trans)glycosidases"/>
    <property type="match status" value="1"/>
</dbReference>
<dbReference type="SUPFAM" id="SSF49452">
    <property type="entry name" value="Starch-binding domain-like"/>
    <property type="match status" value="2"/>
</dbReference>
<dbReference type="PROSITE" id="PS51166">
    <property type="entry name" value="CBM20"/>
    <property type="match status" value="2"/>
</dbReference>
<evidence type="ECO:0000250" key="1"/>
<evidence type="ECO:0000255" key="2">
    <source>
        <dbReference type="PROSITE-ProRule" id="PRU00594"/>
    </source>
</evidence>
<evidence type="ECO:0000256" key="3">
    <source>
        <dbReference type="SAM" id="MobiDB-lite"/>
    </source>
</evidence>
<evidence type="ECO:0000305" key="4"/>
<comment type="function">
    <text evidence="1">Cytosolic alpha-glucanotransferase essential for the cytosolic metabolism of maltose, an intermediate on the pathway by which starch is converted to sucrose in leaves at night.</text>
</comment>
<comment type="catalytic activity">
    <reaction>
        <text>Transfers a segment of a (1-&gt;4)-alpha-D-glucan to a new position in an acceptor, which may be glucose or a (1-&gt;4)-alpha-D-glucan.</text>
        <dbReference type="EC" id="2.4.1.25"/>
    </reaction>
</comment>
<comment type="subcellular location">
    <subcellularLocation>
        <location evidence="4">Cytoplasm</location>
        <location evidence="4">Cytosol</location>
    </subcellularLocation>
</comment>
<comment type="similarity">
    <text evidence="4">Belongs to the disproportionating enzyme family.</text>
</comment>
<comment type="sequence caution" evidence="4">
    <conflict type="frameshift">
        <sequence resource="EMBL" id="AK067082"/>
    </conflict>
</comment>
<protein>
    <recommendedName>
        <fullName>4-alpha-glucanotransferase DPE2</fullName>
        <ecNumber>2.4.1.25</ecNumber>
    </recommendedName>
    <alternativeName>
        <fullName>Amylomaltase</fullName>
    </alternativeName>
    <alternativeName>
        <fullName>Disproportionating enzyme</fullName>
        <shortName>D-enzyme</shortName>
    </alternativeName>
    <alternativeName>
        <fullName>Protein DISPROPORTIONATING ENZYME 2</fullName>
    </alternativeName>
</protein>
<feature type="chain" id="PRO_0000407921" description="4-alpha-glucanotransferase DPE2">
    <location>
        <begin position="1"/>
        <end position="946"/>
    </location>
</feature>
<feature type="domain" description="CBM20 1" evidence="2">
    <location>
        <begin position="7"/>
        <end position="115"/>
    </location>
</feature>
<feature type="domain" description="CBM20 2" evidence="2">
    <location>
        <begin position="150"/>
        <end position="264"/>
    </location>
</feature>
<feature type="region of interest" description="Disordered" evidence="3">
    <location>
        <begin position="919"/>
        <end position="946"/>
    </location>
</feature>
<feature type="sequence conflict" description="In Ref. 4; AK067082." evidence="4" ref="4">
    <original>R</original>
    <variation>G</variation>
    <location>
        <position position="275"/>
    </location>
</feature>
<reference key="1">
    <citation type="journal article" date="2005" name="Nature">
        <title>The map-based sequence of the rice genome.</title>
        <authorList>
            <consortium name="International rice genome sequencing project (IRGSP)"/>
        </authorList>
    </citation>
    <scope>NUCLEOTIDE SEQUENCE [LARGE SCALE GENOMIC DNA]</scope>
    <source>
        <strain>cv. Nipponbare</strain>
    </source>
</reference>
<reference key="2">
    <citation type="journal article" date="2008" name="Nucleic Acids Res.">
        <title>The rice annotation project database (RAP-DB): 2008 update.</title>
        <authorList>
            <consortium name="The rice annotation project (RAP)"/>
        </authorList>
    </citation>
    <scope>GENOME REANNOTATION</scope>
    <source>
        <strain>cv. Nipponbare</strain>
    </source>
</reference>
<reference key="3">
    <citation type="journal article" date="2013" name="Rice">
        <title>Improvement of the Oryza sativa Nipponbare reference genome using next generation sequence and optical map data.</title>
        <authorList>
            <person name="Kawahara Y."/>
            <person name="de la Bastide M."/>
            <person name="Hamilton J.P."/>
            <person name="Kanamori H."/>
            <person name="McCombie W.R."/>
            <person name="Ouyang S."/>
            <person name="Schwartz D.C."/>
            <person name="Tanaka T."/>
            <person name="Wu J."/>
            <person name="Zhou S."/>
            <person name="Childs K.L."/>
            <person name="Davidson R.M."/>
            <person name="Lin H."/>
            <person name="Quesada-Ocampo L."/>
            <person name="Vaillancourt B."/>
            <person name="Sakai H."/>
            <person name="Lee S.S."/>
            <person name="Kim J."/>
            <person name="Numa H."/>
            <person name="Itoh T."/>
            <person name="Buell C.R."/>
            <person name="Matsumoto T."/>
        </authorList>
    </citation>
    <scope>GENOME REANNOTATION</scope>
    <source>
        <strain>cv. Nipponbare</strain>
    </source>
</reference>
<reference key="4">
    <citation type="journal article" date="2003" name="Science">
        <title>Collection, mapping, and annotation of over 28,000 cDNA clones from japonica rice.</title>
        <authorList>
            <consortium name="The rice full-length cDNA consortium"/>
        </authorList>
    </citation>
    <scope>NUCLEOTIDE SEQUENCE [LARGE SCALE MRNA]</scope>
    <source>
        <strain>cv. Nipponbare</strain>
    </source>
</reference>
<name>DPE2_ORYSJ</name>
<organism>
    <name type="scientific">Oryza sativa subsp. japonica</name>
    <name type="common">Rice</name>
    <dbReference type="NCBI Taxonomy" id="39947"/>
    <lineage>
        <taxon>Eukaryota</taxon>
        <taxon>Viridiplantae</taxon>
        <taxon>Streptophyta</taxon>
        <taxon>Embryophyta</taxon>
        <taxon>Tracheophyta</taxon>
        <taxon>Spermatophyta</taxon>
        <taxon>Magnoliopsida</taxon>
        <taxon>Liliopsida</taxon>
        <taxon>Poales</taxon>
        <taxon>Poaceae</taxon>
        <taxon>BOP clade</taxon>
        <taxon>Oryzoideae</taxon>
        <taxon>Oryzeae</taxon>
        <taxon>Oryzinae</taxon>
        <taxon>Oryza</taxon>
        <taxon>Oryza sativa</taxon>
    </lineage>
</organism>
<keyword id="KW-0119">Carbohydrate metabolism</keyword>
<keyword id="KW-0963">Cytoplasm</keyword>
<keyword id="KW-0328">Glycosyltransferase</keyword>
<keyword id="KW-1185">Reference proteome</keyword>
<keyword id="KW-0677">Repeat</keyword>
<keyword id="KW-0808">Transferase</keyword>
<proteinExistence type="evidence at transcript level"/>
<accession>Q69Q02</accession>
<accession>A0A0P0XA64</accession>
<sequence length="946" mass="108294">MTNLSGKKSLNTVTLVFKLPYYTQWGQSLLIAGSEPALGSWNVKQGLSLSPVHQGNELIWSGRVSVATGFTCQYNYYVVDDNKNVLRSESGEKRKLVLPEGVQDGDVVEIRDWWQDASEALFLRSAFKNVIFNGSENAKRELKTTSLNKSLEPEDIVVQFIVSCPRLGAGSTVVVTGSNPQLGRWQTQDGLKLNYVGDSIWKANCLLRKSEFPIKYKYCKISEAGVSSLEFGPNREADVDLSSPKPSRYVLLSDGALRESPWRGAGVAVPIFSIRSNEDLGVGEFLDLKLLVDWAVNSGFHLVQLLPINDTSVHGMWWDSYPYSSLSVFALHPLYLRVQALSDAIPGDIKDEISQAKKQLDKKDVDYEASLASKLSIARKIFKLEKDKVLNSSSFKQFLSENEEWLKPYAAFCFLRDFFETSDHSQWGRFSQFSKEKLDKLVSEGTLHHDVICFHYYIQYHLYMQLSEAAAYARKKKVILKGDLPIGVDRNSVDTWVYPTLFRMNTATGAPPDYFDKNGQNWGFPTYNWEEMSKDNYGWWRARLTQMAKYFTAYRIDHILGFFRIWELPDHAATGLVGKFRPSIALSQEELLSEGLWDFDRMSRPYILQETLEEKFGSFWTVIAANFLNEYKKQHYEFKEDCNTEKKIIAKLKNSSEKSLWLEKEDSIRRGLFDLLQNIVLIRDPEDSTKFYPRFNQEDTSSFNDLDEHSKNILRRLYYDYYFARQENLWRQNALKTLPVLLNSSDMLACGEDLGLIPACVHPVMQELGLIGLRIQRMPSEPNLEFGIPSQYSYMTVCAPSCHDCSTLRAWWEEDGGRRSRFYQTVIGSDDEPPSRCTPEVANFIVKQHFDAPSMWAIFPLQDLLALKDKYTTRPAKEETINDPTNPKHYWRFRLHVTLDSLLDDKDIQATIKELVTSSGRSFPGKVDGAEESGEKLAKVQLNGKP</sequence>
<gene>
    <name type="primary">DPE2</name>
    <name type="ordered locus">Os07g0662900</name>
    <name type="ordered locus">LOC_Os07g46790</name>
    <name type="ORF">P0453E03.120</name>
</gene>